<organism>
    <name type="scientific">Mycobacterium tuberculosis (strain ATCC 25177 / H37Ra)</name>
    <dbReference type="NCBI Taxonomy" id="419947"/>
    <lineage>
        <taxon>Bacteria</taxon>
        <taxon>Bacillati</taxon>
        <taxon>Actinomycetota</taxon>
        <taxon>Actinomycetes</taxon>
        <taxon>Mycobacteriales</taxon>
        <taxon>Mycobacteriaceae</taxon>
        <taxon>Mycobacterium</taxon>
        <taxon>Mycobacterium tuberculosis complex</taxon>
    </lineage>
</organism>
<reference key="1">
    <citation type="journal article" date="2008" name="PLoS ONE">
        <title>Genetic basis of virulence attenuation revealed by comparative genomic analysis of Mycobacterium tuberculosis strain H37Ra versus H37Rv.</title>
        <authorList>
            <person name="Zheng H."/>
            <person name="Lu L."/>
            <person name="Wang B."/>
            <person name="Pu S."/>
            <person name="Zhang X."/>
            <person name="Zhu G."/>
            <person name="Shi W."/>
            <person name="Zhang L."/>
            <person name="Wang H."/>
            <person name="Wang S."/>
            <person name="Zhao G."/>
            <person name="Zhang Y."/>
        </authorList>
    </citation>
    <scope>NUCLEOTIDE SEQUENCE [LARGE SCALE GENOMIC DNA]</scope>
    <source>
        <strain>ATCC 25177 / H37Ra</strain>
    </source>
</reference>
<evidence type="ECO:0000250" key="1">
    <source>
        <dbReference type="UniProtKB" id="P9WIK7"/>
    </source>
</evidence>
<evidence type="ECO:0000305" key="2"/>
<comment type="function">
    <text evidence="1">Catalyzes the acylation of trehalose-2-sulfate by adding the palmitoyl group at the 2'-position to yield the intermediate trehalose-2-sulfate-2'-palmitate (SL659).</text>
</comment>
<comment type="catalytic activity">
    <reaction evidence="1">
        <text>2-O-sulfo-alpha,alpha-trehalose + hexadecanoyl-CoA = 2-O-sulfo-2'-O-hexadecanoyl-alpha,alpha-trehalose + CoA</text>
        <dbReference type="Rhea" id="RHEA:44060"/>
        <dbReference type="ChEBI" id="CHEBI:57287"/>
        <dbReference type="ChEBI" id="CHEBI:57379"/>
        <dbReference type="ChEBI" id="CHEBI:60091"/>
        <dbReference type="ChEBI" id="CHEBI:60092"/>
        <dbReference type="EC" id="2.3.1.288"/>
    </reaction>
    <physiologicalReaction direction="left-to-right" evidence="1">
        <dbReference type="Rhea" id="RHEA:44061"/>
    </physiologicalReaction>
</comment>
<comment type="miscellaneous">
    <text>In strain H37Ra, the sulfolipid-1 (SL-1) is not synthesized.</text>
</comment>
<comment type="similarity">
    <text evidence="2">Belongs to the PapA acyltransferase family.</text>
</comment>
<accession>A5U9E9</accession>
<dbReference type="EC" id="2.3.1.288" evidence="1"/>
<dbReference type="EMBL" id="CP000611">
    <property type="protein sequence ID" value="ABQ75649.1"/>
    <property type="molecule type" value="Genomic_DNA"/>
</dbReference>
<dbReference type="RefSeq" id="WP_003899707.1">
    <property type="nucleotide sequence ID" value="NZ_CP016972.1"/>
</dbReference>
<dbReference type="SMR" id="A5U9E9"/>
<dbReference type="KEGG" id="mra:MRA_3860"/>
<dbReference type="eggNOG" id="COG1020">
    <property type="taxonomic scope" value="Bacteria"/>
</dbReference>
<dbReference type="HOGENOM" id="CLU_034647_0_0_11"/>
<dbReference type="Proteomes" id="UP000001988">
    <property type="component" value="Chromosome"/>
</dbReference>
<dbReference type="GO" id="GO:0016746">
    <property type="term" value="F:acyltransferase activity"/>
    <property type="evidence" value="ECO:0007669"/>
    <property type="project" value="UniProtKB-KW"/>
</dbReference>
<dbReference type="GO" id="GO:0008610">
    <property type="term" value="P:lipid biosynthetic process"/>
    <property type="evidence" value="ECO:0007669"/>
    <property type="project" value="UniProtKB-ARBA"/>
</dbReference>
<dbReference type="FunFam" id="3.30.559.10:FF:000022">
    <property type="entry name" value="Trehalose-2-sulfate acyltransferase papA2"/>
    <property type="match status" value="1"/>
</dbReference>
<dbReference type="FunFam" id="3.30.559.30:FF:000007">
    <property type="entry name" value="Trehalose-2-sulfate acyltransferase papA2"/>
    <property type="match status" value="1"/>
</dbReference>
<dbReference type="Gene3D" id="3.30.559.10">
    <property type="entry name" value="Chloramphenicol acetyltransferase-like domain"/>
    <property type="match status" value="1"/>
</dbReference>
<dbReference type="Gene3D" id="3.30.559.30">
    <property type="entry name" value="Nonribosomal peptide synthetase, condensation domain"/>
    <property type="match status" value="1"/>
</dbReference>
<dbReference type="InterPro" id="IPR023213">
    <property type="entry name" value="CAT-like_dom_sf"/>
</dbReference>
<dbReference type="InterPro" id="IPR001242">
    <property type="entry name" value="Condensatn"/>
</dbReference>
<dbReference type="Pfam" id="PF00668">
    <property type="entry name" value="Condensation"/>
    <property type="match status" value="1"/>
</dbReference>
<dbReference type="SUPFAM" id="SSF52777">
    <property type="entry name" value="CoA-dependent acyltransferases"/>
    <property type="match status" value="2"/>
</dbReference>
<proteinExistence type="inferred from homology"/>
<gene>
    <name type="primary">papA2</name>
    <name type="ordered locus">MRA_3860</name>
</gene>
<feature type="chain" id="PRO_0000314663" description="Trehalose-2-sulfate acyltransferase PapA2">
    <location>
        <begin position="1"/>
        <end position="468"/>
    </location>
</feature>
<sequence>MFSITTLRDWTPDPGSIICWHASPTAKAKARQAPISEVPPSYQQAQHLRRYRDHVARGLDMSRLMIFTWDLPGRCNIRAMNYAINAHLRRHDTYHSWFEFDNAEHIVRHTIADPADIEVVQAEHQNMTSAELRHHIATPQPLQWDCFLFGIIQSDDHFTFYASIAHLCVDPMIVGVLFIEIHMMYSALVGGDPPIELPPAGRYDDHCVRQYADTAALTLDSARVRRWVEFAANNDGTLPHFPLPLGDLSVPHTGKLLTETLMDEQQGERFEAACVAAGARFSGGVFACAALAERELTNCETFDVVTTTDTRRTPTELRTTGWFTGLVPITVPVASGLFDSAARVAQISFDSGKDLATVPFDRVLELARPETGLRPPRPGNFVMSFLDASIAPLSTVANSDLNFRIYDEGRVSHQVSMWVNRYQHQTTVTVLFPDNPIASESVANYIAAMKSIYIRTADGTLATLKPGT</sequence>
<protein>
    <recommendedName>
        <fullName evidence="1">Trehalose-2-sulfate acyltransferase PapA2</fullName>
        <ecNumber evidence="1">2.3.1.288</ecNumber>
    </recommendedName>
    <alternativeName>
        <fullName evidence="1">2-O-sulfo trehalose long-chain-acyltransferase</fullName>
    </alternativeName>
    <alternativeName>
        <fullName>Polyketide synthase-associated protein A2</fullName>
    </alternativeName>
</protein>
<keyword id="KW-0012">Acyltransferase</keyword>
<keyword id="KW-1185">Reference proteome</keyword>
<keyword id="KW-0808">Transferase</keyword>
<name>PAPA2_MYCTA</name>